<accession>P39727</accession>
<accession>D6VPH4</accession>
<protein>
    <recommendedName>
        <fullName>ER-derived vesicles protein ERV46</fullName>
    </recommendedName>
</protein>
<gene>
    <name type="primary">ERV46</name>
    <name type="ordered locus">YAL042W</name>
    <name type="ORF">FUN9</name>
</gene>
<feature type="chain" id="PRO_0000202419" description="ER-derived vesicles protein ERV46">
    <location>
        <begin position="1"/>
        <end position="415"/>
    </location>
</feature>
<feature type="topological domain" description="Cytoplasmic" evidence="1">
    <location>
        <begin position="1"/>
        <end position="24"/>
    </location>
</feature>
<feature type="transmembrane region" description="Helical" evidence="1">
    <location>
        <begin position="25"/>
        <end position="45"/>
    </location>
</feature>
<feature type="topological domain" description="Lumenal" evidence="1">
    <location>
        <begin position="46"/>
        <end position="376"/>
    </location>
</feature>
<feature type="transmembrane region" description="Helical" evidence="1">
    <location>
        <begin position="377"/>
        <end position="397"/>
    </location>
</feature>
<feature type="topological domain" description="Cytoplasmic" evidence="1">
    <location>
        <begin position="398"/>
        <end position="415"/>
    </location>
</feature>
<feature type="short sequence motif" description="Phenylalanine-tyrosine motif">
    <location>
        <begin position="402"/>
        <end position="403"/>
    </location>
</feature>
<organism>
    <name type="scientific">Saccharomyces cerevisiae (strain ATCC 204508 / S288c)</name>
    <name type="common">Baker's yeast</name>
    <dbReference type="NCBI Taxonomy" id="559292"/>
    <lineage>
        <taxon>Eukaryota</taxon>
        <taxon>Fungi</taxon>
        <taxon>Dikarya</taxon>
        <taxon>Ascomycota</taxon>
        <taxon>Saccharomycotina</taxon>
        <taxon>Saccharomycetes</taxon>
        <taxon>Saccharomycetales</taxon>
        <taxon>Saccharomycetaceae</taxon>
        <taxon>Saccharomyces</taxon>
    </lineage>
</organism>
<name>ERV46_YEAST</name>
<proteinExistence type="evidence at protein level"/>
<dbReference type="EMBL" id="U12980">
    <property type="protein sequence ID" value="AAC04989.1"/>
    <property type="molecule type" value="Genomic_DNA"/>
</dbReference>
<dbReference type="EMBL" id="BK006935">
    <property type="protein sequence ID" value="DAA06944.1"/>
    <property type="molecule type" value="Genomic_DNA"/>
</dbReference>
<dbReference type="PIR" id="S51977">
    <property type="entry name" value="S51977"/>
</dbReference>
<dbReference type="RefSeq" id="NP_009358.1">
    <property type="nucleotide sequence ID" value="NM_001178187.1"/>
</dbReference>
<dbReference type="BioGRID" id="31785">
    <property type="interactions" value="169"/>
</dbReference>
<dbReference type="ComplexPortal" id="CPX-1045">
    <property type="entry name" value="ERV41-ERV46 retrograde receptor complex"/>
</dbReference>
<dbReference type="DIP" id="DIP-3792N"/>
<dbReference type="FunCoup" id="P39727">
    <property type="interactions" value="841"/>
</dbReference>
<dbReference type="IntAct" id="P39727">
    <property type="interactions" value="41"/>
</dbReference>
<dbReference type="MINT" id="P39727"/>
<dbReference type="STRING" id="4932.YAL042W"/>
<dbReference type="iPTMnet" id="P39727"/>
<dbReference type="PaxDb" id="4932-YAL042W"/>
<dbReference type="PeptideAtlas" id="P39727"/>
<dbReference type="EnsemblFungi" id="YAL042W_mRNA">
    <property type="protein sequence ID" value="YAL042W"/>
    <property type="gene ID" value="YAL042W"/>
</dbReference>
<dbReference type="GeneID" id="851256"/>
<dbReference type="KEGG" id="sce:YAL042W"/>
<dbReference type="AGR" id="SGD:S000000040"/>
<dbReference type="SGD" id="S000000040">
    <property type="gene designation" value="ERV46"/>
</dbReference>
<dbReference type="VEuPathDB" id="FungiDB:YAL042W"/>
<dbReference type="eggNOG" id="KOG2667">
    <property type="taxonomic scope" value="Eukaryota"/>
</dbReference>
<dbReference type="GeneTree" id="ENSGT00530000063113"/>
<dbReference type="HOGENOM" id="CLU_034705_1_0_1"/>
<dbReference type="InParanoid" id="P39727"/>
<dbReference type="OMA" id="QRHEGCR"/>
<dbReference type="OrthoDB" id="270930at2759"/>
<dbReference type="BioCyc" id="YEAST:G3O-28850-MONOMER"/>
<dbReference type="BioGRID-ORCS" id="851256">
    <property type="hits" value="7 hits in 10 CRISPR screens"/>
</dbReference>
<dbReference type="PRO" id="PR:P39727"/>
<dbReference type="Proteomes" id="UP000002311">
    <property type="component" value="Chromosome I"/>
</dbReference>
<dbReference type="RNAct" id="P39727">
    <property type="molecule type" value="protein"/>
</dbReference>
<dbReference type="GO" id="GO:0030134">
    <property type="term" value="C:COPII-coated ER to Golgi transport vesicle"/>
    <property type="evidence" value="ECO:0000314"/>
    <property type="project" value="SGD"/>
</dbReference>
<dbReference type="GO" id="GO:0005783">
    <property type="term" value="C:endoplasmic reticulum"/>
    <property type="evidence" value="ECO:0007005"/>
    <property type="project" value="SGD"/>
</dbReference>
<dbReference type="GO" id="GO:0005789">
    <property type="term" value="C:endoplasmic reticulum membrane"/>
    <property type="evidence" value="ECO:0000314"/>
    <property type="project" value="SGD"/>
</dbReference>
<dbReference type="GO" id="GO:0000139">
    <property type="term" value="C:Golgi membrane"/>
    <property type="evidence" value="ECO:0000314"/>
    <property type="project" value="SGD"/>
</dbReference>
<dbReference type="GO" id="GO:0061852">
    <property type="term" value="C:retrograde transporter complex, Golgi to ER"/>
    <property type="evidence" value="ECO:0000353"/>
    <property type="project" value="ComplexPortal"/>
</dbReference>
<dbReference type="GO" id="GO:0006888">
    <property type="term" value="P:endoplasmic reticulum to Golgi vesicle-mediated transport"/>
    <property type="evidence" value="ECO:0000316"/>
    <property type="project" value="SGD"/>
</dbReference>
<dbReference type="GO" id="GO:0015031">
    <property type="term" value="P:protein transport"/>
    <property type="evidence" value="ECO:0007669"/>
    <property type="project" value="UniProtKB-KW"/>
</dbReference>
<dbReference type="GO" id="GO:0006890">
    <property type="term" value="P:retrograde vesicle-mediated transport, Golgi to endoplasmic reticulum"/>
    <property type="evidence" value="ECO:0000315"/>
    <property type="project" value="ComplexPortal"/>
</dbReference>
<dbReference type="InterPro" id="IPR045888">
    <property type="entry name" value="Erv"/>
</dbReference>
<dbReference type="InterPro" id="IPR012936">
    <property type="entry name" value="Erv_C"/>
</dbReference>
<dbReference type="InterPro" id="IPR039542">
    <property type="entry name" value="Erv_N"/>
</dbReference>
<dbReference type="PANTHER" id="PTHR10984">
    <property type="entry name" value="ENDOPLASMIC RETICULUM-GOLGI INTERMEDIATE COMPARTMENT PROTEIN"/>
    <property type="match status" value="1"/>
</dbReference>
<dbReference type="PANTHER" id="PTHR10984:SF25">
    <property type="entry name" value="ENDOPLASMIC RETICULUM-GOLGI INTERMEDIATE COMPARTMENT PROTEIN 3"/>
    <property type="match status" value="1"/>
</dbReference>
<dbReference type="Pfam" id="PF07970">
    <property type="entry name" value="COPIIcoated_ERV"/>
    <property type="match status" value="1"/>
</dbReference>
<dbReference type="Pfam" id="PF13850">
    <property type="entry name" value="ERGIC_N"/>
    <property type="match status" value="1"/>
</dbReference>
<keyword id="KW-0256">Endoplasmic reticulum</keyword>
<keyword id="KW-0931">ER-Golgi transport</keyword>
<keyword id="KW-0333">Golgi apparatus</keyword>
<keyword id="KW-0472">Membrane</keyword>
<keyword id="KW-0653">Protein transport</keyword>
<keyword id="KW-1185">Reference proteome</keyword>
<keyword id="KW-0812">Transmembrane</keyword>
<keyword id="KW-1133">Transmembrane helix</keyword>
<keyword id="KW-0813">Transport</keyword>
<reference key="1">
    <citation type="journal article" date="1995" name="Proc. Natl. Acad. Sci. U.S.A.">
        <title>The nucleotide sequence of chromosome I from Saccharomyces cerevisiae.</title>
        <authorList>
            <person name="Bussey H."/>
            <person name="Kaback D.B."/>
            <person name="Zhong W.-W."/>
            <person name="Vo D.H."/>
            <person name="Clark M.W."/>
            <person name="Fortin N."/>
            <person name="Hall J."/>
            <person name="Ouellette B.F.F."/>
            <person name="Keng T."/>
            <person name="Barton A.B."/>
            <person name="Su Y."/>
            <person name="Davies C.J."/>
            <person name="Storms R.K."/>
        </authorList>
    </citation>
    <scope>NUCLEOTIDE SEQUENCE [LARGE SCALE GENOMIC DNA]</scope>
    <source>
        <strain>ATCC 204508 / S288c</strain>
    </source>
</reference>
<reference key="2">
    <citation type="submission" date="1996-04" db="EMBL/GenBank/DDBJ databases">
        <authorList>
            <person name="Vo D."/>
        </authorList>
    </citation>
    <scope>SEQUENCE REVISION TO 405</scope>
</reference>
<reference key="3">
    <citation type="journal article" date="2014" name="G3 (Bethesda)">
        <title>The reference genome sequence of Saccharomyces cerevisiae: Then and now.</title>
        <authorList>
            <person name="Engel S.R."/>
            <person name="Dietrich F.S."/>
            <person name="Fisk D.G."/>
            <person name="Binkley G."/>
            <person name="Balakrishnan R."/>
            <person name="Costanzo M.C."/>
            <person name="Dwight S.S."/>
            <person name="Hitz B.C."/>
            <person name="Karra K."/>
            <person name="Nash R.S."/>
            <person name="Weng S."/>
            <person name="Wong E.D."/>
            <person name="Lloyd P."/>
            <person name="Skrzypek M.S."/>
            <person name="Miyasato S.R."/>
            <person name="Simison M."/>
            <person name="Cherry J.M."/>
        </authorList>
    </citation>
    <scope>GENOME REANNOTATION</scope>
    <source>
        <strain>ATCC 204508 / S288c</strain>
    </source>
</reference>
<reference key="4">
    <citation type="journal article" date="2001" name="Biosci. Biotechnol. Biochem.">
        <title>A novel membrane protein complex on the endoplasmic reticulum and early Golgi compartments in the yeast Saccharomyces cerevisiae.</title>
        <authorList>
            <person name="Cho J.-H."/>
            <person name="Noda Y."/>
            <person name="Adachi H."/>
            <person name="Yoda K."/>
        </authorList>
    </citation>
    <scope>INTERACTION WITH ERV41</scope>
    <scope>SUBCELLULAR LOCATION</scope>
</reference>
<reference key="5">
    <citation type="journal article" date="2001" name="J. Cell Biol.">
        <title>Erv41p and Erv46p: new components of COPII vesicles involved in transport between the ER and Golgi complex.</title>
        <authorList>
            <person name="Otte S."/>
            <person name="Belden W.J."/>
            <person name="Heidtman M."/>
            <person name="Liu J."/>
            <person name="Jensen O.N."/>
            <person name="Barlowe C."/>
        </authorList>
    </citation>
    <scope>FUNCTION</scope>
    <scope>INTERACTION WITH ERV41</scope>
    <scope>SUBCELLULAR LOCATION</scope>
</reference>
<reference key="6">
    <citation type="journal article" date="2002" name="EMBO J.">
        <title>The Erv41p-Erv46p complex: multiple export signals are required in trans for COPII-dependent transport from the ER.</title>
        <authorList>
            <person name="Otte S."/>
            <person name="Barlowe C."/>
        </authorList>
    </citation>
    <scope>FUNCTION</scope>
    <scope>SUBCELLULAR LOCATION</scope>
</reference>
<reference key="7">
    <citation type="journal article" date="2005" name="Mol. Cell. Biol.">
        <title>Immunoisolation of the yeast Golgi subcompartments and characterization of a novel membrane protein, Svp26, discovered in the Sed5-containing compartments.</title>
        <authorList>
            <person name="Inadome H."/>
            <person name="Noda Y."/>
            <person name="Adachi H."/>
            <person name="Yoda K."/>
        </authorList>
    </citation>
    <scope>SUBCELLULAR LOCATION</scope>
</reference>
<sequence>MKRSTLLSLDAFAKTEEDVRVRTRAGGLITLSCILTTLFLLVNEWGQFNSVVTRPQLVVDRDRHAKLELNMDVTFPSMPCDLVNLDIMDDSGEMQLDILDAGFTMSRLNSEGRPVGDATELHVGGNGDGTAPVNNDPNYCGPCYGAKDQSQNENLAQEEKVCCQDCDAVRSAYLEAGWAFFDGKNIEQCEREGYVSKINEHLNEGCRIKGSAQINRIQGNLHFAPGKPYQNAYGHFHDTSLYDKTSNLNFNHIINHLSFGKPIQSHSKLLGNDKRHGGAVVATSPLDGRQVFPDRNTHFHQFSYFAKIVPTRYEYLDNVVIETAQFSATFHSRPLAGGRDKDHPNTLHVRGGIPGMFVFFEMSPLKVINKEQHGQTWSGFILNCITSIGGVLAVGTVMDKLFYKAQRSIWGKKSQ</sequence>
<evidence type="ECO:0000255" key="1"/>
<evidence type="ECO:0000269" key="2">
    <source>
    </source>
</evidence>
<evidence type="ECO:0000269" key="3">
    <source>
    </source>
</evidence>
<evidence type="ECO:0000269" key="4">
    <source>
    </source>
</evidence>
<evidence type="ECO:0000305" key="5"/>
<comment type="function">
    <text evidence="2 4">Constituent of COPII-coated endoplasmic reticulum-derived transport vesicles. Required for efficient transport of a subset of secretory proteins to the Golgi. The C-terminal Phe-Tyr motif is required for exit from the endoplasmic reticulum. Facilitates retrograde transport from the Golgi to the endoplasmic reticulum.</text>
</comment>
<comment type="subunit">
    <text evidence="2 3">Interacts with ERV41.</text>
</comment>
<comment type="interaction">
    <interactant intactId="EBI-20659">
        <id>P39727</id>
    </interactant>
    <interactant intactId="EBI-27850">
        <id>Q04651</id>
        <label>ERV41</label>
    </interactant>
    <organismsDiffer>false</organismsDiffer>
    <experiments>6</experiments>
</comment>
<comment type="subcellular location">
    <subcellularLocation>
        <location>Endoplasmic reticulum membrane</location>
        <topology>Multi-pass membrane protein</topology>
    </subcellularLocation>
    <subcellularLocation>
        <location>Golgi apparatus membrane</location>
        <topology>Multi-pass membrane protein</topology>
    </subcellularLocation>
    <text>Recycles between endoplasmic reticulum and Golgi. Resides in the endoplasmic and Golgi compartments, and then packaged into endoplasmic reticulum derived vesicles.</text>
</comment>
<comment type="similarity">
    <text evidence="5">Belongs to the ERGIC family.</text>
</comment>